<dbReference type="EMBL" id="AL138655">
    <property type="protein sequence ID" value="CAB72172.1"/>
    <property type="molecule type" value="Genomic_DNA"/>
</dbReference>
<dbReference type="EMBL" id="CP002686">
    <property type="protein sequence ID" value="AEE79599.1"/>
    <property type="molecule type" value="Genomic_DNA"/>
</dbReference>
<dbReference type="EMBL" id="CP002686">
    <property type="protein sequence ID" value="AEE79600.1"/>
    <property type="molecule type" value="Genomic_DNA"/>
</dbReference>
<dbReference type="EMBL" id="AY039884">
    <property type="protein sequence ID" value="AAK63988.1"/>
    <property type="molecule type" value="mRNA"/>
</dbReference>
<dbReference type="EMBL" id="AK317319">
    <property type="protein sequence ID" value="BAH19993.1"/>
    <property type="molecule type" value="mRNA"/>
</dbReference>
<dbReference type="PIR" id="T47762">
    <property type="entry name" value="T47762"/>
</dbReference>
<dbReference type="RefSeq" id="NP_001030876.1">
    <molecule id="Q9M1J6-2"/>
    <property type="nucleotide sequence ID" value="NM_001035799.2"/>
</dbReference>
<dbReference type="RefSeq" id="NP_191261.1">
    <molecule id="Q9M1J6-1"/>
    <property type="nucleotide sequence ID" value="NM_115561.5"/>
</dbReference>
<dbReference type="SMR" id="Q9M1J6"/>
<dbReference type="FunCoup" id="Q9M1J6">
    <property type="interactions" value="1204"/>
</dbReference>
<dbReference type="STRING" id="3702.Q9M1J6"/>
<dbReference type="GlyCosmos" id="Q9M1J6">
    <property type="glycosylation" value="2 sites, No reported glycans"/>
</dbReference>
<dbReference type="GlyGen" id="Q9M1J6">
    <property type="glycosylation" value="2 sites"/>
</dbReference>
<dbReference type="PaxDb" id="3702-AT3G57020.1"/>
<dbReference type="ProteomicsDB" id="228373">
    <molecule id="Q9M1J6-1"/>
</dbReference>
<dbReference type="EnsemblPlants" id="AT3G57020.1">
    <molecule id="Q9M1J6-1"/>
    <property type="protein sequence ID" value="AT3G57020.1"/>
    <property type="gene ID" value="AT3G57020"/>
</dbReference>
<dbReference type="EnsemblPlants" id="AT3G57020.2">
    <molecule id="Q9M1J6-2"/>
    <property type="protein sequence ID" value="AT3G57020.2"/>
    <property type="gene ID" value="AT3G57020"/>
</dbReference>
<dbReference type="GeneID" id="824869"/>
<dbReference type="Gramene" id="AT3G57020.1">
    <molecule id="Q9M1J6-1"/>
    <property type="protein sequence ID" value="AT3G57020.1"/>
    <property type="gene ID" value="AT3G57020"/>
</dbReference>
<dbReference type="Gramene" id="AT3G57020.2">
    <molecule id="Q9M1J6-2"/>
    <property type="protein sequence ID" value="AT3G57020.2"/>
    <property type="gene ID" value="AT3G57020"/>
</dbReference>
<dbReference type="KEGG" id="ath:AT3G57020"/>
<dbReference type="Araport" id="AT3G57020"/>
<dbReference type="TAIR" id="AT3G57020"/>
<dbReference type="eggNOG" id="KOG1520">
    <property type="taxonomic scope" value="Eukaryota"/>
</dbReference>
<dbReference type="InParanoid" id="Q9M1J6"/>
<dbReference type="OMA" id="IMMNADT"/>
<dbReference type="OrthoDB" id="5307922at2759"/>
<dbReference type="PhylomeDB" id="Q9M1J6"/>
<dbReference type="BioCyc" id="ARA:AT3G57020-MONOMER"/>
<dbReference type="PRO" id="PR:Q9M1J6"/>
<dbReference type="Proteomes" id="UP000006548">
    <property type="component" value="Chromosome 3"/>
</dbReference>
<dbReference type="ExpressionAtlas" id="Q9M1J6">
    <property type="expression patterns" value="baseline and differential"/>
</dbReference>
<dbReference type="GO" id="GO:0005829">
    <property type="term" value="C:cytosol"/>
    <property type="evidence" value="ECO:0007005"/>
    <property type="project" value="TAIR"/>
</dbReference>
<dbReference type="GO" id="GO:0005783">
    <property type="term" value="C:endoplasmic reticulum"/>
    <property type="evidence" value="ECO:0007005"/>
    <property type="project" value="TAIR"/>
</dbReference>
<dbReference type="GO" id="GO:0000325">
    <property type="term" value="C:plant-type vacuole"/>
    <property type="evidence" value="ECO:0007005"/>
    <property type="project" value="TAIR"/>
</dbReference>
<dbReference type="FunFam" id="2.120.10.30:FF:000032">
    <property type="entry name" value="Protein STRICTOSIDINE SYNTHASE-LIKE 13"/>
    <property type="match status" value="1"/>
</dbReference>
<dbReference type="Gene3D" id="2.120.10.30">
    <property type="entry name" value="TolB, C-terminal domain"/>
    <property type="match status" value="1"/>
</dbReference>
<dbReference type="InterPro" id="IPR011042">
    <property type="entry name" value="6-blade_b-propeller_TolB-like"/>
</dbReference>
<dbReference type="InterPro" id="IPR018119">
    <property type="entry name" value="Strictosidine_synth_cons-reg"/>
</dbReference>
<dbReference type="PANTHER" id="PTHR10426:SF90">
    <property type="entry name" value="PROTEIN STRICTOSIDINE SYNTHASE-LIKE 9"/>
    <property type="match status" value="1"/>
</dbReference>
<dbReference type="PANTHER" id="PTHR10426">
    <property type="entry name" value="STRICTOSIDINE SYNTHASE-RELATED"/>
    <property type="match status" value="1"/>
</dbReference>
<dbReference type="Pfam" id="PF20067">
    <property type="entry name" value="SSL_N"/>
    <property type="match status" value="1"/>
</dbReference>
<dbReference type="Pfam" id="PF03088">
    <property type="entry name" value="Str_synth"/>
    <property type="match status" value="1"/>
</dbReference>
<dbReference type="SUPFAM" id="SSF63829">
    <property type="entry name" value="Calcium-dependent phosphotriesterase"/>
    <property type="match status" value="1"/>
</dbReference>
<reference key="1">
    <citation type="journal article" date="2000" name="Nature">
        <title>Sequence and analysis of chromosome 3 of the plant Arabidopsis thaliana.</title>
        <authorList>
            <person name="Salanoubat M."/>
            <person name="Lemcke K."/>
            <person name="Rieger M."/>
            <person name="Ansorge W."/>
            <person name="Unseld M."/>
            <person name="Fartmann B."/>
            <person name="Valle G."/>
            <person name="Bloecker H."/>
            <person name="Perez-Alonso M."/>
            <person name="Obermaier B."/>
            <person name="Delseny M."/>
            <person name="Boutry M."/>
            <person name="Grivell L.A."/>
            <person name="Mache R."/>
            <person name="Puigdomenech P."/>
            <person name="De Simone V."/>
            <person name="Choisne N."/>
            <person name="Artiguenave F."/>
            <person name="Robert C."/>
            <person name="Brottier P."/>
            <person name="Wincker P."/>
            <person name="Cattolico L."/>
            <person name="Weissenbach J."/>
            <person name="Saurin W."/>
            <person name="Quetier F."/>
            <person name="Schaefer M."/>
            <person name="Mueller-Auer S."/>
            <person name="Gabel C."/>
            <person name="Fuchs M."/>
            <person name="Benes V."/>
            <person name="Wurmbach E."/>
            <person name="Drzonek H."/>
            <person name="Erfle H."/>
            <person name="Jordan N."/>
            <person name="Bangert S."/>
            <person name="Wiedelmann R."/>
            <person name="Kranz H."/>
            <person name="Voss H."/>
            <person name="Holland R."/>
            <person name="Brandt P."/>
            <person name="Nyakatura G."/>
            <person name="Vezzi A."/>
            <person name="D'Angelo M."/>
            <person name="Pallavicini A."/>
            <person name="Toppo S."/>
            <person name="Simionati B."/>
            <person name="Conrad A."/>
            <person name="Hornischer K."/>
            <person name="Kauer G."/>
            <person name="Loehnert T.-H."/>
            <person name="Nordsiek G."/>
            <person name="Reichelt J."/>
            <person name="Scharfe M."/>
            <person name="Schoen O."/>
            <person name="Bargues M."/>
            <person name="Terol J."/>
            <person name="Climent J."/>
            <person name="Navarro P."/>
            <person name="Collado C."/>
            <person name="Perez-Perez A."/>
            <person name="Ottenwaelder B."/>
            <person name="Duchemin D."/>
            <person name="Cooke R."/>
            <person name="Laudie M."/>
            <person name="Berger-Llauro C."/>
            <person name="Purnelle B."/>
            <person name="Masuy D."/>
            <person name="de Haan M."/>
            <person name="Maarse A.C."/>
            <person name="Alcaraz J.-P."/>
            <person name="Cottet A."/>
            <person name="Casacuberta E."/>
            <person name="Monfort A."/>
            <person name="Argiriou A."/>
            <person name="Flores M."/>
            <person name="Liguori R."/>
            <person name="Vitale D."/>
            <person name="Mannhaupt G."/>
            <person name="Haase D."/>
            <person name="Schoof H."/>
            <person name="Rudd S."/>
            <person name="Zaccaria P."/>
            <person name="Mewes H.-W."/>
            <person name="Mayer K.F.X."/>
            <person name="Kaul S."/>
            <person name="Town C.D."/>
            <person name="Koo H.L."/>
            <person name="Tallon L.J."/>
            <person name="Jenkins J."/>
            <person name="Rooney T."/>
            <person name="Rizzo M."/>
            <person name="Walts A."/>
            <person name="Utterback T."/>
            <person name="Fujii C.Y."/>
            <person name="Shea T.P."/>
            <person name="Creasy T.H."/>
            <person name="Haas B."/>
            <person name="Maiti R."/>
            <person name="Wu D."/>
            <person name="Peterson J."/>
            <person name="Van Aken S."/>
            <person name="Pai G."/>
            <person name="Militscher J."/>
            <person name="Sellers P."/>
            <person name="Gill J.E."/>
            <person name="Feldblyum T.V."/>
            <person name="Preuss D."/>
            <person name="Lin X."/>
            <person name="Nierman W.C."/>
            <person name="Salzberg S.L."/>
            <person name="White O."/>
            <person name="Venter J.C."/>
            <person name="Fraser C.M."/>
            <person name="Kaneko T."/>
            <person name="Nakamura Y."/>
            <person name="Sato S."/>
            <person name="Kato T."/>
            <person name="Asamizu E."/>
            <person name="Sasamoto S."/>
            <person name="Kimura T."/>
            <person name="Idesawa K."/>
            <person name="Kawashima K."/>
            <person name="Kishida Y."/>
            <person name="Kiyokawa C."/>
            <person name="Kohara M."/>
            <person name="Matsumoto M."/>
            <person name="Matsuno A."/>
            <person name="Muraki A."/>
            <person name="Nakayama S."/>
            <person name="Nakazaki N."/>
            <person name="Shinpo S."/>
            <person name="Takeuchi C."/>
            <person name="Wada T."/>
            <person name="Watanabe A."/>
            <person name="Yamada M."/>
            <person name="Yasuda M."/>
            <person name="Tabata S."/>
        </authorList>
    </citation>
    <scope>NUCLEOTIDE SEQUENCE [LARGE SCALE GENOMIC DNA]</scope>
    <source>
        <strain>cv. Columbia</strain>
    </source>
</reference>
<reference key="2">
    <citation type="journal article" date="2017" name="Plant J.">
        <title>Araport11: a complete reannotation of the Arabidopsis thaliana reference genome.</title>
        <authorList>
            <person name="Cheng C.Y."/>
            <person name="Krishnakumar V."/>
            <person name="Chan A.P."/>
            <person name="Thibaud-Nissen F."/>
            <person name="Schobel S."/>
            <person name="Town C.D."/>
        </authorList>
    </citation>
    <scope>GENOME REANNOTATION</scope>
    <source>
        <strain>cv. Columbia</strain>
    </source>
</reference>
<reference key="3">
    <citation type="journal article" date="2003" name="Science">
        <title>Empirical analysis of transcriptional activity in the Arabidopsis genome.</title>
        <authorList>
            <person name="Yamada K."/>
            <person name="Lim J."/>
            <person name="Dale J.M."/>
            <person name="Chen H."/>
            <person name="Shinn P."/>
            <person name="Palm C.J."/>
            <person name="Southwick A.M."/>
            <person name="Wu H.C."/>
            <person name="Kim C.J."/>
            <person name="Nguyen M."/>
            <person name="Pham P.K."/>
            <person name="Cheuk R.F."/>
            <person name="Karlin-Newmann G."/>
            <person name="Liu S.X."/>
            <person name="Lam B."/>
            <person name="Sakano H."/>
            <person name="Wu T."/>
            <person name="Yu G."/>
            <person name="Miranda M."/>
            <person name="Quach H.L."/>
            <person name="Tripp M."/>
            <person name="Chang C.H."/>
            <person name="Lee J.M."/>
            <person name="Toriumi M.J."/>
            <person name="Chan M.M."/>
            <person name="Tang C.C."/>
            <person name="Onodera C.S."/>
            <person name="Deng J.M."/>
            <person name="Akiyama K."/>
            <person name="Ansari Y."/>
            <person name="Arakawa T."/>
            <person name="Banh J."/>
            <person name="Banno F."/>
            <person name="Bowser L."/>
            <person name="Brooks S.Y."/>
            <person name="Carninci P."/>
            <person name="Chao Q."/>
            <person name="Choy N."/>
            <person name="Enju A."/>
            <person name="Goldsmith A.D."/>
            <person name="Gurjal M."/>
            <person name="Hansen N.F."/>
            <person name="Hayashizaki Y."/>
            <person name="Johnson-Hopson C."/>
            <person name="Hsuan V.W."/>
            <person name="Iida K."/>
            <person name="Karnes M."/>
            <person name="Khan S."/>
            <person name="Koesema E."/>
            <person name="Ishida J."/>
            <person name="Jiang P.X."/>
            <person name="Jones T."/>
            <person name="Kawai J."/>
            <person name="Kamiya A."/>
            <person name="Meyers C."/>
            <person name="Nakajima M."/>
            <person name="Narusaka M."/>
            <person name="Seki M."/>
            <person name="Sakurai T."/>
            <person name="Satou M."/>
            <person name="Tamse R."/>
            <person name="Vaysberg M."/>
            <person name="Wallender E.K."/>
            <person name="Wong C."/>
            <person name="Yamamura Y."/>
            <person name="Yuan S."/>
            <person name="Shinozaki K."/>
            <person name="Davis R.W."/>
            <person name="Theologis A."/>
            <person name="Ecker J.R."/>
        </authorList>
    </citation>
    <scope>NUCLEOTIDE SEQUENCE [LARGE SCALE MRNA]</scope>
    <source>
        <strain>cv. Columbia</strain>
    </source>
</reference>
<reference key="4">
    <citation type="journal article" date="2009" name="DNA Res.">
        <title>Analysis of multiple occurrences of alternative splicing events in Arabidopsis thaliana using novel sequenced full-length cDNAs.</title>
        <authorList>
            <person name="Iida K."/>
            <person name="Fukami-Kobayashi K."/>
            <person name="Toyoda A."/>
            <person name="Sakaki Y."/>
            <person name="Kobayashi M."/>
            <person name="Seki M."/>
            <person name="Shinozaki K."/>
        </authorList>
    </citation>
    <scope>NUCLEOTIDE SEQUENCE [LARGE SCALE MRNA] (ISOFORM 2)</scope>
    <source>
        <strain>cv. Columbia</strain>
        <tissue>Flower</tissue>
        <tissue>Silique</tissue>
    </source>
</reference>
<reference key="5">
    <citation type="journal article" date="2000" name="Biochem. Biophys. Res. Commun.">
        <title>Animal and plant members of a gene family with similarity to alkaloid-synthesizing enzymes.</title>
        <authorList>
            <person name="Fabbri M."/>
            <person name="Delp G."/>
            <person name="Schmidt O."/>
            <person name="Theopold U."/>
        </authorList>
    </citation>
    <scope>GENE FAMILY</scope>
    <scope>NOMENCLATURE</scope>
</reference>
<reference key="6">
    <citation type="journal article" date="2009" name="Plant Biol.">
        <title>Phylogenetic and transcriptional analysis of a strictosidine synthase-like gene family in Arabidopsis thaliana reveals involvement in plant defence responses.</title>
        <authorList>
            <person name="Sohani M.M."/>
            <person name="Schenk P.M."/>
            <person name="Schultz C.J."/>
            <person name="Schmidt O."/>
        </authorList>
    </citation>
    <scope>GENE FAMILY</scope>
    <source>
        <strain>cv. Columbia</strain>
    </source>
</reference>
<sequence>MPINQKIPTWFAVPAVFAVLSVISYQTLIVPENLEGAKNVLTMAKTIPIPVAGPESIEFDPKGEGPYAAVVDGRILKWRGDDLGWVDFAYTSPHRGNCSKTEVVPTCGRPLGLTFEKKTGDLYICDGYLGLMKVGPEGGLAELIVDEAEGRKVMFANQGDIDEEEDVFYFNDSSDKYHFRDVFFVAVSGERSGRVIRYDKKTKEAKVIMDNLVCNNGLALNKDRSFLITCESGTSLVHRYWIKGPKAGTRDIFAKVPGYPDNIRLTSTGDFWIGLHCKKNLIGRLIVKYKWLGKLVEKTMKLEYVIAFINGFKPHGVAVKISGETGEVLELLEDKEGKTMKYVSEAYERDDGKLWFGSVYWPAVWVLDRK</sequence>
<keyword id="KW-0025">Alternative splicing</keyword>
<keyword id="KW-0325">Glycoprotein</keyword>
<keyword id="KW-1185">Reference proteome</keyword>
<keyword id="KW-0732">Signal</keyword>
<keyword id="KW-0926">Vacuole</keyword>
<accession>Q9M1J6</accession>
<accession>B9DGX6</accession>
<comment type="subcellular location">
    <subcellularLocation>
        <location evidence="1">Vacuole</location>
    </subcellularLocation>
</comment>
<comment type="alternative products">
    <event type="alternative splicing"/>
    <isoform>
        <id>Q9M1J6-1</id>
        <name>1</name>
        <sequence type="displayed"/>
    </isoform>
    <isoform>
        <id>Q9M1J6-2</id>
        <name>2</name>
        <sequence type="described" ref="VSP_057336"/>
    </isoform>
</comment>
<comment type="similarity">
    <text evidence="6">Belongs to the strictosidine synthase family.</text>
</comment>
<protein>
    <recommendedName>
        <fullName evidence="4">Protein STRICTOSIDINE SYNTHASE-LIKE 9</fullName>
        <shortName evidence="4">AtSSL9</shortName>
    </recommendedName>
    <alternativeName>
        <fullName evidence="5">Strictosidine synthase 6</fullName>
        <shortName evidence="5">AtSS6</shortName>
    </alternativeName>
</protein>
<organism evidence="9">
    <name type="scientific">Arabidopsis thaliana</name>
    <name type="common">Mouse-ear cress</name>
    <dbReference type="NCBI Taxonomy" id="3702"/>
    <lineage>
        <taxon>Eukaryota</taxon>
        <taxon>Viridiplantae</taxon>
        <taxon>Streptophyta</taxon>
        <taxon>Embryophyta</taxon>
        <taxon>Tracheophyta</taxon>
        <taxon>Spermatophyta</taxon>
        <taxon>Magnoliopsida</taxon>
        <taxon>eudicotyledons</taxon>
        <taxon>Gunneridae</taxon>
        <taxon>Pentapetalae</taxon>
        <taxon>rosids</taxon>
        <taxon>malvids</taxon>
        <taxon>Brassicales</taxon>
        <taxon>Brassicaceae</taxon>
        <taxon>Camelineae</taxon>
        <taxon>Arabidopsis</taxon>
    </lineage>
</organism>
<evidence type="ECO:0000250" key="1"/>
<evidence type="ECO:0000255" key="2"/>
<evidence type="ECO:0000255" key="3">
    <source>
        <dbReference type="PROSITE-ProRule" id="PRU00498"/>
    </source>
</evidence>
<evidence type="ECO:0000303" key="4">
    <source>
    </source>
</evidence>
<evidence type="ECO:0000303" key="5">
    <source>
    </source>
</evidence>
<evidence type="ECO:0000305" key="6"/>
<evidence type="ECO:0000312" key="7">
    <source>
        <dbReference type="Araport" id="AT3G57020"/>
    </source>
</evidence>
<evidence type="ECO:0000312" key="8">
    <source>
        <dbReference type="EMBL" id="CAB72172.1"/>
    </source>
</evidence>
<evidence type="ECO:0000312" key="9">
    <source>
        <dbReference type="Proteomes" id="UP000006548"/>
    </source>
</evidence>
<feature type="signal peptide" evidence="2">
    <location>
        <begin position="1"/>
        <end position="26"/>
    </location>
</feature>
<feature type="chain" id="PRO_0000431596" description="Protein STRICTOSIDINE SYNTHASE-LIKE 9" evidence="2">
    <location>
        <begin position="27"/>
        <end position="370"/>
    </location>
</feature>
<feature type="glycosylation site" description="N-linked (GlcNAc...) asparagine" evidence="3">
    <location>
        <position position="97"/>
    </location>
</feature>
<feature type="glycosylation site" description="N-linked (GlcNAc...) asparagine" evidence="3">
    <location>
        <position position="171"/>
    </location>
</feature>
<feature type="splice variant" id="VSP_057336" description="In isoform 2.">
    <location>
        <begin position="95"/>
        <end position="108"/>
    </location>
</feature>
<name>SSL9_ARATH</name>
<gene>
    <name evidence="4" type="primary">SSL9</name>
    <name evidence="5" type="synonym">SS6</name>
    <name evidence="7" type="ordered locus">At3g57020</name>
    <name evidence="8" type="ORF">F24I3.100</name>
</gene>
<proteinExistence type="evidence at transcript level"/>